<proteinExistence type="inferred from homology"/>
<comment type="function">
    <text evidence="1">General factor that plays a major role in the activation of eukaryotic genes transcribed by RNA polymerase II.</text>
</comment>
<comment type="subunit">
    <text>Associates with TFIID-IIA (DA complex) to form TFIID-IIA-IIB (DAB-complex) which is then recognized by polymerase II.</text>
</comment>
<comment type="subcellular location">
    <subcellularLocation>
        <location evidence="1">Nucleus</location>
    </subcellularLocation>
</comment>
<comment type="similarity">
    <text evidence="3">Belongs to the TFIIB family.</text>
</comment>
<feature type="chain" id="PRO_0000119305" description="Transcription initiation factor IIB">
    <location>
        <begin position="1"/>
        <end position="312"/>
    </location>
</feature>
<feature type="repeat" description="1">
    <location>
        <begin position="120"/>
        <end position="196"/>
    </location>
</feature>
<feature type="repeat" description="2">
    <location>
        <begin position="213"/>
        <end position="290"/>
    </location>
</feature>
<feature type="zinc finger region" description="TFIIB-type" evidence="2">
    <location>
        <begin position="10"/>
        <end position="42"/>
    </location>
</feature>
<feature type="binding site" evidence="2">
    <location>
        <position position="14"/>
    </location>
    <ligand>
        <name>Zn(2+)</name>
        <dbReference type="ChEBI" id="CHEBI:29105"/>
    </ligand>
</feature>
<feature type="binding site" evidence="2">
    <location>
        <position position="17"/>
    </location>
    <ligand>
        <name>Zn(2+)</name>
        <dbReference type="ChEBI" id="CHEBI:29105"/>
    </ligand>
</feature>
<feature type="binding site" evidence="2">
    <location>
        <position position="34"/>
    </location>
    <ligand>
        <name>Zn(2+)</name>
        <dbReference type="ChEBI" id="CHEBI:29105"/>
    </ligand>
</feature>
<feature type="binding site" evidence="2">
    <location>
        <position position="37"/>
    </location>
    <ligand>
        <name>Zn(2+)</name>
        <dbReference type="ChEBI" id="CHEBI:29105"/>
    </ligand>
</feature>
<name>TF2B_ENCCU</name>
<organism>
    <name type="scientific">Encephalitozoon cuniculi (strain GB-M1)</name>
    <name type="common">Microsporidian parasite</name>
    <dbReference type="NCBI Taxonomy" id="284813"/>
    <lineage>
        <taxon>Eukaryota</taxon>
        <taxon>Fungi</taxon>
        <taxon>Fungi incertae sedis</taxon>
        <taxon>Microsporidia</taxon>
        <taxon>Unikaryonidae</taxon>
        <taxon>Encephalitozoon</taxon>
    </lineage>
</organism>
<dbReference type="EMBL" id="AL590446">
    <property type="protein sequence ID" value="CAD25470.1"/>
    <property type="molecule type" value="Genomic_DNA"/>
</dbReference>
<dbReference type="RefSeq" id="NP_585866.1">
    <property type="nucleotide sequence ID" value="NM_001041488.1"/>
</dbReference>
<dbReference type="SMR" id="Q8SRP3"/>
<dbReference type="FunCoup" id="Q8SRP3">
    <property type="interactions" value="240"/>
</dbReference>
<dbReference type="STRING" id="284813.Q8SRP3"/>
<dbReference type="GeneID" id="859291"/>
<dbReference type="KEGG" id="ecu:ECU06_1100i"/>
<dbReference type="VEuPathDB" id="MicrosporidiaDB:ECU06_1100i"/>
<dbReference type="HOGENOM" id="CLU_043736_1_1_1"/>
<dbReference type="InParanoid" id="Q8SRP3"/>
<dbReference type="OMA" id="DHDQRMK"/>
<dbReference type="OrthoDB" id="25790at2759"/>
<dbReference type="Proteomes" id="UP000000819">
    <property type="component" value="Chromosome VI"/>
</dbReference>
<dbReference type="GO" id="GO:0005634">
    <property type="term" value="C:nucleus"/>
    <property type="evidence" value="ECO:0007669"/>
    <property type="project" value="UniProtKB-SubCell"/>
</dbReference>
<dbReference type="GO" id="GO:0097550">
    <property type="term" value="C:transcription preinitiation complex"/>
    <property type="evidence" value="ECO:0007669"/>
    <property type="project" value="TreeGrafter"/>
</dbReference>
<dbReference type="GO" id="GO:0016251">
    <property type="term" value="F:RNA polymerase II general transcription initiation factor activity"/>
    <property type="evidence" value="ECO:0007669"/>
    <property type="project" value="TreeGrafter"/>
</dbReference>
<dbReference type="GO" id="GO:0017025">
    <property type="term" value="F:TBP-class protein binding"/>
    <property type="evidence" value="ECO:0007669"/>
    <property type="project" value="InterPro"/>
</dbReference>
<dbReference type="GO" id="GO:0008270">
    <property type="term" value="F:zinc ion binding"/>
    <property type="evidence" value="ECO:0007669"/>
    <property type="project" value="UniProtKB-KW"/>
</dbReference>
<dbReference type="GO" id="GO:0006367">
    <property type="term" value="P:transcription initiation at RNA polymerase II promoter"/>
    <property type="evidence" value="ECO:0007669"/>
    <property type="project" value="TreeGrafter"/>
</dbReference>
<dbReference type="GO" id="GO:0070897">
    <property type="term" value="P:transcription preinitiation complex assembly"/>
    <property type="evidence" value="ECO:0007669"/>
    <property type="project" value="InterPro"/>
</dbReference>
<dbReference type="CDD" id="cd20551">
    <property type="entry name" value="CYCLIN_TFIIB_rpt1"/>
    <property type="match status" value="1"/>
</dbReference>
<dbReference type="CDD" id="cd20552">
    <property type="entry name" value="CYCLIN_TFIIB_rpt2"/>
    <property type="match status" value="1"/>
</dbReference>
<dbReference type="FunFam" id="1.10.472.170:FF:000001">
    <property type="entry name" value="Transcription initiation factor IIB"/>
    <property type="match status" value="1"/>
</dbReference>
<dbReference type="Gene3D" id="1.10.472.170">
    <property type="match status" value="1"/>
</dbReference>
<dbReference type="Gene3D" id="1.10.472.10">
    <property type="entry name" value="Cyclin-like"/>
    <property type="match status" value="1"/>
</dbReference>
<dbReference type="InterPro" id="IPR013763">
    <property type="entry name" value="Cyclin-like_dom"/>
</dbReference>
<dbReference type="InterPro" id="IPR036915">
    <property type="entry name" value="Cyclin-like_sf"/>
</dbReference>
<dbReference type="InterPro" id="IPR000812">
    <property type="entry name" value="TFIIB"/>
</dbReference>
<dbReference type="InterPro" id="IPR023486">
    <property type="entry name" value="TFIIB_CS"/>
</dbReference>
<dbReference type="InterPro" id="IPR013150">
    <property type="entry name" value="TFIIB_cyclin"/>
</dbReference>
<dbReference type="InterPro" id="IPR013137">
    <property type="entry name" value="Znf_TFIIB"/>
</dbReference>
<dbReference type="PANTHER" id="PTHR11618:SF13">
    <property type="entry name" value="TRANSCRIPTION INITIATION FACTOR IIB"/>
    <property type="match status" value="1"/>
</dbReference>
<dbReference type="PANTHER" id="PTHR11618">
    <property type="entry name" value="TRANSCRIPTION INITIATION FACTOR IIB-RELATED"/>
    <property type="match status" value="1"/>
</dbReference>
<dbReference type="Pfam" id="PF00382">
    <property type="entry name" value="TFIIB"/>
    <property type="match status" value="2"/>
</dbReference>
<dbReference type="Pfam" id="PF08271">
    <property type="entry name" value="Zn_Ribbon_TF"/>
    <property type="match status" value="1"/>
</dbReference>
<dbReference type="PRINTS" id="PR00685">
    <property type="entry name" value="TIFACTORIIB"/>
</dbReference>
<dbReference type="SMART" id="SM00385">
    <property type="entry name" value="CYCLIN"/>
    <property type="match status" value="2"/>
</dbReference>
<dbReference type="SUPFAM" id="SSF47954">
    <property type="entry name" value="Cyclin-like"/>
    <property type="match status" value="2"/>
</dbReference>
<dbReference type="SUPFAM" id="SSF57783">
    <property type="entry name" value="Zinc beta-ribbon"/>
    <property type="match status" value="1"/>
</dbReference>
<dbReference type="PROSITE" id="PS00782">
    <property type="entry name" value="TFIIB"/>
    <property type="match status" value="1"/>
</dbReference>
<dbReference type="PROSITE" id="PS51134">
    <property type="entry name" value="ZF_TFIIB"/>
    <property type="match status" value="1"/>
</dbReference>
<reference key="1">
    <citation type="journal article" date="2001" name="Nature">
        <title>Genome sequence and gene compaction of the eukaryote parasite Encephalitozoon cuniculi.</title>
        <authorList>
            <person name="Katinka M.D."/>
            <person name="Duprat S."/>
            <person name="Cornillot E."/>
            <person name="Metenier G."/>
            <person name="Thomarat F."/>
            <person name="Prensier G."/>
            <person name="Barbe V."/>
            <person name="Peyretaillade E."/>
            <person name="Brottier P."/>
            <person name="Wincker P."/>
            <person name="Delbac F."/>
            <person name="El Alaoui H."/>
            <person name="Peyret P."/>
            <person name="Saurin W."/>
            <person name="Gouy M."/>
            <person name="Weissenbach J."/>
            <person name="Vivares C.P."/>
        </authorList>
    </citation>
    <scope>NUCLEOTIDE SEQUENCE [LARGE SCALE GENOMIC DNA]</scope>
    <source>
        <strain>GB-M1</strain>
    </source>
</reference>
<gene>
    <name type="ordered locus">ECU06_1100i</name>
</gene>
<evidence type="ECO:0000250" key="1"/>
<evidence type="ECO:0000255" key="2">
    <source>
        <dbReference type="PROSITE-ProRule" id="PRU00469"/>
    </source>
</evidence>
<evidence type="ECO:0000305" key="3"/>
<keyword id="KW-0479">Metal-binding</keyword>
<keyword id="KW-0539">Nucleus</keyword>
<keyword id="KW-1185">Reference proteome</keyword>
<keyword id="KW-0677">Repeat</keyword>
<keyword id="KW-0804">Transcription</keyword>
<keyword id="KW-0805">Transcription regulation</keyword>
<keyword id="KW-0862">Zinc</keyword>
<keyword id="KW-0863">Zinc-finger</keyword>
<protein>
    <recommendedName>
        <fullName>Transcription initiation factor IIB</fullName>
    </recommendedName>
    <alternativeName>
        <fullName>General transcription factor TFIIB</fullName>
    </alternativeName>
</protein>
<accession>Q8SRP3</accession>
<sequence length="312" mass="35165">MKTLPKFKPFVQTCSDCGETQNIVEDYKNGYHVCGRCGCIVGNRIIDEGSEWRSFGDSNKVDPCRIGSASNPYLESEQLDTMISTGGGMNSYVLSKIQMKNSMRGPERALKHGMNLITAFCERSNLSRTIIDRAHYIFKNIEERKLLKGKNVEGIVAACIYIACRQEECPRTFKEISVMTAVQKREIGRCFKLISPHLERMATMSTENIIARFCSDLNLNIKIQKIATEIAKAAHELGCLAGKSPDSIAAAVIYMVTNLFPEEKKIQKDIQFVTNVTEVTIKNTYKELLTFKYDIIPENMVNKESIDKLPGY</sequence>